<feature type="chain" id="PRO_0000272284" description="Protein STU1">
    <location>
        <begin position="1"/>
        <end position="1303"/>
    </location>
</feature>
<feature type="region of interest" description="Disordered" evidence="2">
    <location>
        <begin position="239"/>
        <end position="259"/>
    </location>
</feature>
<feature type="region of interest" description="Disordered" evidence="2">
    <location>
        <begin position="531"/>
        <end position="664"/>
    </location>
</feature>
<feature type="region of interest" description="Disordered" evidence="2">
    <location>
        <begin position="953"/>
        <end position="977"/>
    </location>
</feature>
<feature type="compositionally biased region" description="Polar residues" evidence="2">
    <location>
        <begin position="249"/>
        <end position="259"/>
    </location>
</feature>
<feature type="compositionally biased region" description="Basic and acidic residues" evidence="2">
    <location>
        <begin position="554"/>
        <end position="568"/>
    </location>
</feature>
<feature type="compositionally biased region" description="Polar residues" evidence="2">
    <location>
        <begin position="573"/>
        <end position="583"/>
    </location>
</feature>
<feature type="compositionally biased region" description="Basic and acidic residues" evidence="2">
    <location>
        <begin position="596"/>
        <end position="609"/>
    </location>
</feature>
<feature type="compositionally biased region" description="Polar residues" evidence="2">
    <location>
        <begin position="618"/>
        <end position="629"/>
    </location>
</feature>
<feature type="compositionally biased region" description="Basic and acidic residues" evidence="2">
    <location>
        <begin position="634"/>
        <end position="648"/>
    </location>
</feature>
<feature type="compositionally biased region" description="Polar residues" evidence="2">
    <location>
        <begin position="653"/>
        <end position="664"/>
    </location>
</feature>
<feature type="compositionally biased region" description="Polar residues" evidence="2">
    <location>
        <begin position="955"/>
        <end position="972"/>
    </location>
</feature>
<proteinExistence type="inferred from homology"/>
<accession>Q59WD5</accession>
<accession>A0A1D8PE19</accession>
<protein>
    <recommendedName>
        <fullName>Protein STU1</fullName>
    </recommendedName>
</protein>
<reference key="1">
    <citation type="journal article" date="2004" name="Proc. Natl. Acad. Sci. U.S.A.">
        <title>The diploid genome sequence of Candida albicans.</title>
        <authorList>
            <person name="Jones T."/>
            <person name="Federspiel N.A."/>
            <person name="Chibana H."/>
            <person name="Dungan J."/>
            <person name="Kalman S."/>
            <person name="Magee B.B."/>
            <person name="Newport G."/>
            <person name="Thorstenson Y.R."/>
            <person name="Agabian N."/>
            <person name="Magee P.T."/>
            <person name="Davis R.W."/>
            <person name="Scherer S."/>
        </authorList>
    </citation>
    <scope>NUCLEOTIDE SEQUENCE [LARGE SCALE GENOMIC DNA]</scope>
    <source>
        <strain>SC5314 / ATCC MYA-2876</strain>
    </source>
</reference>
<reference key="2">
    <citation type="journal article" date="2007" name="Genome Biol.">
        <title>Assembly of the Candida albicans genome into sixteen supercontigs aligned on the eight chromosomes.</title>
        <authorList>
            <person name="van het Hoog M."/>
            <person name="Rast T.J."/>
            <person name="Martchenko M."/>
            <person name="Grindle S."/>
            <person name="Dignard D."/>
            <person name="Hogues H."/>
            <person name="Cuomo C."/>
            <person name="Berriman M."/>
            <person name="Scherer S."/>
            <person name="Magee B.B."/>
            <person name="Whiteway M."/>
            <person name="Chibana H."/>
            <person name="Nantel A."/>
            <person name="Magee P.T."/>
        </authorList>
    </citation>
    <scope>GENOME REANNOTATION</scope>
    <source>
        <strain>SC5314 / ATCC MYA-2876</strain>
    </source>
</reference>
<reference key="3">
    <citation type="journal article" date="2013" name="Genome Biol.">
        <title>Assembly of a phased diploid Candida albicans genome facilitates allele-specific measurements and provides a simple model for repeat and indel structure.</title>
        <authorList>
            <person name="Muzzey D."/>
            <person name="Schwartz K."/>
            <person name="Weissman J.S."/>
            <person name="Sherlock G."/>
        </authorList>
    </citation>
    <scope>NUCLEOTIDE SEQUENCE [LARGE SCALE GENOMIC DNA]</scope>
    <scope>GENOME REANNOTATION</scope>
    <source>
        <strain>SC5314 / ATCC MYA-2876</strain>
    </source>
</reference>
<comment type="function">
    <text evidence="1">Microtubule binding protein that promotes the stabilization of dynamic microtubules. Required for mitotic spindle formation (By similarity).</text>
</comment>
<comment type="subunit">
    <text evidence="1">Interacts with microtubules.</text>
</comment>
<comment type="subcellular location">
    <subcellularLocation>
        <location evidence="1">Cytoplasm</location>
        <location evidence="1">Cytoskeleton</location>
    </subcellularLocation>
    <subcellularLocation>
        <location evidence="1">Nucleus</location>
    </subcellularLocation>
    <subcellularLocation>
        <location evidence="1">Cytoplasm</location>
        <location evidence="1">Cytoskeleton</location>
        <location evidence="1">Spindle</location>
    </subcellularLocation>
</comment>
<comment type="similarity">
    <text evidence="3">Belongs to the CLASP family.</text>
</comment>
<keyword id="KW-0131">Cell cycle</keyword>
<keyword id="KW-0132">Cell division</keyword>
<keyword id="KW-0963">Cytoplasm</keyword>
<keyword id="KW-0206">Cytoskeleton</keyword>
<keyword id="KW-0493">Microtubule</keyword>
<keyword id="KW-0498">Mitosis</keyword>
<keyword id="KW-0539">Nucleus</keyword>
<keyword id="KW-1185">Reference proteome</keyword>
<gene>
    <name type="primary">STU1</name>
    <name type="ordered locus">CAALFM_C107360WA</name>
    <name type="ORF">CaO19.11914</name>
    <name type="ORF">CaO19.4435</name>
</gene>
<evidence type="ECO:0000250" key="1"/>
<evidence type="ECO:0000256" key="2">
    <source>
        <dbReference type="SAM" id="MobiDB-lite"/>
    </source>
</evidence>
<evidence type="ECO:0000305" key="3"/>
<sequence>MSTTKFNSISPIELLEIISSYDIQDEIKLSHIQNLKTHIKKDTIDLRNVPIYLQIITKGLEITRLNISSVSFNSLSYLIKRISVQDKSGNILKEECFLILPILINKLGNASSPAGTNSAKKSLEDYWLSSPIEVEDALTEIAFENPNTKITIETIDWMTQILKNISAKFNVPKFLPKILHSIEINPHNEEIIVSTKELLSIYLEKNPSAIEGFKKQIESHSLAQATKDKLLGSVISKLRGSDPEPHVQRANTPRSNTPVSQIQSSLVDVGHDVELLELLNKVNYEIDSSIKALDIRDANSLFNTFEIFMPCFDGKETESNWKVREKNILQMRSILRGNSATQFRSELVQCIHTIANGMCKGASSLRTTLSSNSCQLIKECAVILKKSLEPVAESLFPTLIKLCSSTKNIASTNANMSVAALYANLPYTSKMIQRITLASEDRNYQPRSYSLIWLHILLLKIGIDRSYIGHHDSSFIEAANKVFMKLLKDANPNVRQTAKECYWCFTRVFPEDAERLLKRLEPNIVRALERSQRESGGSGIAPIRTLSSRPSRPSLKEAILEKNKELRQRRPPSRNSGEQSTKIKSVPLPRPTKSSSRLEKSLLRPDVGHKSQPAVRASSWTYPSTQSGPKATFKQRERSKTEVHKKSPLEISRPSSRLDTGAVSSFNNKNDPMINFLSSSDSDLIKEGINLLKYAIIGKENLPSEINSLLKSISEKHVQFMKPLFTSNDYTFKKAASLLLPDDFLRVCALVFDEFDEAVISLIIQCIDVSTFYESACNLLTLVADTPNIPGSHALVMQISNQKLTITKSILQALSIALSKHAVTDVQFGEIFQELVKLIIVLKATDYYSLLCQLFRQLYTIDSNKFSLLVEDVEGKLKEEVEFIVGIESTMTLERPSSKLDYDLTVVKPTSNLGTFVLSQKPSADDFTMLLPKRSEFLGSGEVYNSKMVAKIEASDSSPQKQSQMDQISSKRSNSEHQSEVLVDDFANVSIADGGGSKLNQSKNDDDNLKQFMERIDPLKPISNKIRKISIYEDAKQNSEKPKLERNWGGFQYAKFSRAIRVNAVAENMSLTSQEFESCCSKLVETPSQSALLKMTWFVDSLSVSSYDYQEFFLNKGKHKLEKSLWEFFSKIDKSDHSLVMNGLFLLKQLLKFNDTPNVDKLFALLVDTCSQEELDSELYFIWNEMLLSLNHDELMKSFEKNALNYLEGEENNLTISSLCLNYLAKVLVDDNCLDVAKIYRLDTIFGKLFHEREVMFRKSATICYSNLLKNTNVSPEVKDTLDKVKSRYPASTQRLIEFYMKR</sequence>
<organism>
    <name type="scientific">Candida albicans (strain SC5314 / ATCC MYA-2876)</name>
    <name type="common">Yeast</name>
    <dbReference type="NCBI Taxonomy" id="237561"/>
    <lineage>
        <taxon>Eukaryota</taxon>
        <taxon>Fungi</taxon>
        <taxon>Dikarya</taxon>
        <taxon>Ascomycota</taxon>
        <taxon>Saccharomycotina</taxon>
        <taxon>Pichiomycetes</taxon>
        <taxon>Debaryomycetaceae</taxon>
        <taxon>Candida/Lodderomyces clade</taxon>
        <taxon>Candida</taxon>
    </lineage>
</organism>
<name>STU1_CANAL</name>
<dbReference type="EMBL" id="CP017623">
    <property type="protein sequence ID" value="AOW26384.1"/>
    <property type="molecule type" value="Genomic_DNA"/>
</dbReference>
<dbReference type="RefSeq" id="XP_713879.1">
    <property type="nucleotide sequence ID" value="XM_708786.2"/>
</dbReference>
<dbReference type="BioGRID" id="1227361">
    <property type="interactions" value="1"/>
</dbReference>
<dbReference type="FunCoup" id="Q59WD5">
    <property type="interactions" value="160"/>
</dbReference>
<dbReference type="STRING" id="237561.Q59WD5"/>
<dbReference type="EnsemblFungi" id="C1_07360W_A-T">
    <property type="protein sequence ID" value="C1_07360W_A-T-p1"/>
    <property type="gene ID" value="C1_07360W_A"/>
</dbReference>
<dbReference type="GeneID" id="3644470"/>
<dbReference type="KEGG" id="cal:CAALFM_C107360WA"/>
<dbReference type="CGD" id="CAL0000197796">
    <property type="gene designation" value="orf19.11914"/>
</dbReference>
<dbReference type="VEuPathDB" id="FungiDB:C1_07360W_A"/>
<dbReference type="eggNOG" id="ENOG502QT5T">
    <property type="taxonomic scope" value="Eukaryota"/>
</dbReference>
<dbReference type="HOGENOM" id="CLU_261691_0_0_1"/>
<dbReference type="InParanoid" id="Q59WD5"/>
<dbReference type="OMA" id="AKECYWC"/>
<dbReference type="OrthoDB" id="46159at2759"/>
<dbReference type="PRO" id="PR:Q59WD5"/>
<dbReference type="Proteomes" id="UP000000559">
    <property type="component" value="Chromosome 1"/>
</dbReference>
<dbReference type="GO" id="GO:0005881">
    <property type="term" value="C:cytoplasmic microtubule"/>
    <property type="evidence" value="ECO:0000318"/>
    <property type="project" value="GO_Central"/>
</dbReference>
<dbReference type="GO" id="GO:0005815">
    <property type="term" value="C:microtubule organizing center"/>
    <property type="evidence" value="ECO:0000318"/>
    <property type="project" value="GO_Central"/>
</dbReference>
<dbReference type="GO" id="GO:0072686">
    <property type="term" value="C:mitotic spindle"/>
    <property type="evidence" value="ECO:0000318"/>
    <property type="project" value="GO_Central"/>
</dbReference>
<dbReference type="GO" id="GO:1990023">
    <property type="term" value="C:mitotic spindle midzone"/>
    <property type="evidence" value="ECO:0000318"/>
    <property type="project" value="GO_Central"/>
</dbReference>
<dbReference type="GO" id="GO:0005634">
    <property type="term" value="C:nucleus"/>
    <property type="evidence" value="ECO:0007669"/>
    <property type="project" value="UniProtKB-SubCell"/>
</dbReference>
<dbReference type="GO" id="GO:0005876">
    <property type="term" value="C:spindle microtubule"/>
    <property type="evidence" value="ECO:0000318"/>
    <property type="project" value="GO_Central"/>
</dbReference>
<dbReference type="GO" id="GO:0008017">
    <property type="term" value="F:microtubule binding"/>
    <property type="evidence" value="ECO:0000318"/>
    <property type="project" value="GO_Central"/>
</dbReference>
<dbReference type="GO" id="GO:0060172">
    <property type="term" value="P:astral microtubule depolymerization"/>
    <property type="evidence" value="ECO:0000318"/>
    <property type="project" value="GO_Central"/>
</dbReference>
<dbReference type="GO" id="GO:0051301">
    <property type="term" value="P:cell division"/>
    <property type="evidence" value="ECO:0007669"/>
    <property type="project" value="UniProtKB-KW"/>
</dbReference>
<dbReference type="GO" id="GO:0090307">
    <property type="term" value="P:mitotic spindle assembly"/>
    <property type="evidence" value="ECO:0000318"/>
    <property type="project" value="GO_Central"/>
</dbReference>
<dbReference type="Gene3D" id="1.25.10.10">
    <property type="entry name" value="Leucine-rich Repeat Variant"/>
    <property type="match status" value="2"/>
</dbReference>
<dbReference type="InterPro" id="IPR011989">
    <property type="entry name" value="ARM-like"/>
</dbReference>
<dbReference type="InterPro" id="IPR016024">
    <property type="entry name" value="ARM-type_fold"/>
</dbReference>
<dbReference type="InterPro" id="IPR024395">
    <property type="entry name" value="CLASP_N_dom"/>
</dbReference>
<dbReference type="InterPro" id="IPR034085">
    <property type="entry name" value="TOG"/>
</dbReference>
<dbReference type="PANTHER" id="PTHR21567">
    <property type="entry name" value="CLASP"/>
    <property type="match status" value="1"/>
</dbReference>
<dbReference type="PANTHER" id="PTHR21567:SF9">
    <property type="entry name" value="CLIP-ASSOCIATING PROTEIN"/>
    <property type="match status" value="1"/>
</dbReference>
<dbReference type="Pfam" id="PF12348">
    <property type="entry name" value="CLASP_N"/>
    <property type="match status" value="1"/>
</dbReference>
<dbReference type="SMART" id="SM01349">
    <property type="entry name" value="TOG"/>
    <property type="match status" value="1"/>
</dbReference>
<dbReference type="SUPFAM" id="SSF48371">
    <property type="entry name" value="ARM repeat"/>
    <property type="match status" value="1"/>
</dbReference>